<evidence type="ECO:0000255" key="1">
    <source>
        <dbReference type="HAMAP-Rule" id="MF_00377"/>
    </source>
</evidence>
<evidence type="ECO:0000256" key="2">
    <source>
        <dbReference type="SAM" id="MobiDB-lite"/>
    </source>
</evidence>
<name>DNAA_STRRE</name>
<comment type="function">
    <text evidence="1">Plays an essential role in the initiation and regulation of chromosomal replication. ATP-DnaA binds to the origin of replication (oriC) to initiate formation of the DNA replication initiation complex once per cell cycle. Binds the DnaA box (a 9 base pair repeat at the origin) and separates the double-stranded (ds)DNA. Forms a right-handed helical filament on oriC DNA; dsDNA binds to the exterior of the filament while single-stranded (ss)DNA is stabiized in the filament's interior. The ATP-DnaA-oriC complex binds and stabilizes one strand of the AT-rich DNA unwinding element (DUE), permitting loading of DNA polymerase. After initiation quickly degrades to an ADP-DnaA complex that is not apt for DNA replication. Binds acidic phospholipids.</text>
</comment>
<comment type="subunit">
    <text evidence="1">Oligomerizes as a right-handed, spiral filament on DNA at oriC.</text>
</comment>
<comment type="subcellular location">
    <subcellularLocation>
        <location evidence="1">Cytoplasm</location>
    </subcellularLocation>
</comment>
<comment type="domain">
    <text evidence="1">Domain I is involved in oligomerization and binding regulators, domain II is flexibile and of varying length in different bacteria, domain III forms the AAA+ region, while domain IV binds dsDNA.</text>
</comment>
<comment type="similarity">
    <text evidence="1">Belongs to the DnaA family.</text>
</comment>
<dbReference type="EMBL" id="AF071023">
    <property type="protein sequence ID" value="AAD08806.1"/>
    <property type="molecule type" value="Genomic_DNA"/>
</dbReference>
<dbReference type="SMR" id="Q9ZH76"/>
<dbReference type="GO" id="GO:0005737">
    <property type="term" value="C:cytoplasm"/>
    <property type="evidence" value="ECO:0007669"/>
    <property type="project" value="UniProtKB-SubCell"/>
</dbReference>
<dbReference type="GO" id="GO:0005886">
    <property type="term" value="C:plasma membrane"/>
    <property type="evidence" value="ECO:0007669"/>
    <property type="project" value="TreeGrafter"/>
</dbReference>
<dbReference type="GO" id="GO:0005524">
    <property type="term" value="F:ATP binding"/>
    <property type="evidence" value="ECO:0007669"/>
    <property type="project" value="UniProtKB-UniRule"/>
</dbReference>
<dbReference type="GO" id="GO:0016887">
    <property type="term" value="F:ATP hydrolysis activity"/>
    <property type="evidence" value="ECO:0007669"/>
    <property type="project" value="InterPro"/>
</dbReference>
<dbReference type="GO" id="GO:0003688">
    <property type="term" value="F:DNA replication origin binding"/>
    <property type="evidence" value="ECO:0007669"/>
    <property type="project" value="UniProtKB-UniRule"/>
</dbReference>
<dbReference type="GO" id="GO:0008289">
    <property type="term" value="F:lipid binding"/>
    <property type="evidence" value="ECO:0007669"/>
    <property type="project" value="UniProtKB-KW"/>
</dbReference>
<dbReference type="GO" id="GO:0006270">
    <property type="term" value="P:DNA replication initiation"/>
    <property type="evidence" value="ECO:0007669"/>
    <property type="project" value="UniProtKB-UniRule"/>
</dbReference>
<dbReference type="GO" id="GO:0006275">
    <property type="term" value="P:regulation of DNA replication"/>
    <property type="evidence" value="ECO:0007669"/>
    <property type="project" value="UniProtKB-UniRule"/>
</dbReference>
<dbReference type="CDD" id="cd00009">
    <property type="entry name" value="AAA"/>
    <property type="match status" value="1"/>
</dbReference>
<dbReference type="CDD" id="cd06571">
    <property type="entry name" value="Bac_DnaA_C"/>
    <property type="match status" value="1"/>
</dbReference>
<dbReference type="FunFam" id="1.10.1750.10:FF:000002">
    <property type="entry name" value="Chromosomal replication initiator protein DnaA"/>
    <property type="match status" value="1"/>
</dbReference>
<dbReference type="FunFam" id="1.10.8.60:FF:000003">
    <property type="entry name" value="Chromosomal replication initiator protein DnaA"/>
    <property type="match status" value="1"/>
</dbReference>
<dbReference type="FunFam" id="3.30.300.180:FF:000004">
    <property type="entry name" value="Chromosomal replication initiator protein DnaA"/>
    <property type="match status" value="1"/>
</dbReference>
<dbReference type="FunFam" id="3.40.50.300:FF:000150">
    <property type="entry name" value="Chromosomal replication initiator protein DnaA"/>
    <property type="match status" value="1"/>
</dbReference>
<dbReference type="Gene3D" id="1.10.1750.10">
    <property type="match status" value="1"/>
</dbReference>
<dbReference type="Gene3D" id="1.10.8.60">
    <property type="match status" value="1"/>
</dbReference>
<dbReference type="Gene3D" id="3.30.300.180">
    <property type="match status" value="1"/>
</dbReference>
<dbReference type="Gene3D" id="3.40.50.300">
    <property type="entry name" value="P-loop containing nucleotide triphosphate hydrolases"/>
    <property type="match status" value="1"/>
</dbReference>
<dbReference type="HAMAP" id="MF_00377">
    <property type="entry name" value="DnaA_bact"/>
    <property type="match status" value="1"/>
</dbReference>
<dbReference type="InterPro" id="IPR003593">
    <property type="entry name" value="AAA+_ATPase"/>
</dbReference>
<dbReference type="InterPro" id="IPR001957">
    <property type="entry name" value="Chromosome_initiator_DnaA"/>
</dbReference>
<dbReference type="InterPro" id="IPR020591">
    <property type="entry name" value="Chromosome_initiator_DnaA-like"/>
</dbReference>
<dbReference type="InterPro" id="IPR018312">
    <property type="entry name" value="Chromosome_initiator_DnaA_CS"/>
</dbReference>
<dbReference type="InterPro" id="IPR013159">
    <property type="entry name" value="DnaA_C"/>
</dbReference>
<dbReference type="InterPro" id="IPR013317">
    <property type="entry name" value="DnaA_dom"/>
</dbReference>
<dbReference type="InterPro" id="IPR038454">
    <property type="entry name" value="DnaA_N_sf"/>
</dbReference>
<dbReference type="InterPro" id="IPR027417">
    <property type="entry name" value="P-loop_NTPase"/>
</dbReference>
<dbReference type="InterPro" id="IPR010921">
    <property type="entry name" value="Trp_repressor/repl_initiator"/>
</dbReference>
<dbReference type="NCBIfam" id="TIGR00362">
    <property type="entry name" value="DnaA"/>
    <property type="match status" value="1"/>
</dbReference>
<dbReference type="NCBIfam" id="NF010686">
    <property type="entry name" value="PRK14086.1"/>
    <property type="match status" value="1"/>
</dbReference>
<dbReference type="PANTHER" id="PTHR30050">
    <property type="entry name" value="CHROMOSOMAL REPLICATION INITIATOR PROTEIN DNAA"/>
    <property type="match status" value="1"/>
</dbReference>
<dbReference type="PANTHER" id="PTHR30050:SF2">
    <property type="entry name" value="CHROMOSOMAL REPLICATION INITIATOR PROTEIN DNAA"/>
    <property type="match status" value="1"/>
</dbReference>
<dbReference type="Pfam" id="PF00308">
    <property type="entry name" value="Bac_DnaA"/>
    <property type="match status" value="1"/>
</dbReference>
<dbReference type="Pfam" id="PF08299">
    <property type="entry name" value="Bac_DnaA_C"/>
    <property type="match status" value="1"/>
</dbReference>
<dbReference type="PRINTS" id="PR00051">
    <property type="entry name" value="DNAA"/>
</dbReference>
<dbReference type="SMART" id="SM00382">
    <property type="entry name" value="AAA"/>
    <property type="match status" value="1"/>
</dbReference>
<dbReference type="SMART" id="SM00760">
    <property type="entry name" value="Bac_DnaA_C"/>
    <property type="match status" value="1"/>
</dbReference>
<dbReference type="SUPFAM" id="SSF52540">
    <property type="entry name" value="P-loop containing nucleoside triphosphate hydrolases"/>
    <property type="match status" value="1"/>
</dbReference>
<dbReference type="SUPFAM" id="SSF48295">
    <property type="entry name" value="TrpR-like"/>
    <property type="match status" value="1"/>
</dbReference>
<dbReference type="PROSITE" id="PS01008">
    <property type="entry name" value="DNAA"/>
    <property type="match status" value="1"/>
</dbReference>
<protein>
    <recommendedName>
        <fullName evidence="1">Chromosomal replication initiator protein DnaA</fullName>
    </recommendedName>
</protein>
<feature type="chain" id="PRO_0000114279" description="Chromosomal replication initiator protein DnaA">
    <location>
        <begin position="1"/>
        <end position="643"/>
    </location>
</feature>
<feature type="region of interest" description="Domain I, interacts with DnaA modulators" evidence="1">
    <location>
        <begin position="1"/>
        <end position="97"/>
    </location>
</feature>
<feature type="region of interest" description="Disordered" evidence="2">
    <location>
        <begin position="87"/>
        <end position="303"/>
    </location>
</feature>
<feature type="region of interest" description="Domain II" evidence="1">
    <location>
        <begin position="97"/>
        <end position="302"/>
    </location>
</feature>
<feature type="region of interest" description="Domain III, AAA+ region" evidence="1">
    <location>
        <begin position="303"/>
        <end position="519"/>
    </location>
</feature>
<feature type="region of interest" description="Domain IV, binds dsDNA" evidence="1">
    <location>
        <begin position="520"/>
        <end position="643"/>
    </location>
</feature>
<feature type="compositionally biased region" description="Polar residues" evidence="2">
    <location>
        <begin position="195"/>
        <end position="209"/>
    </location>
</feature>
<feature type="compositionally biased region" description="Basic and acidic residues" evidence="2">
    <location>
        <begin position="222"/>
        <end position="269"/>
    </location>
</feature>
<feature type="compositionally biased region" description="Low complexity" evidence="2">
    <location>
        <begin position="291"/>
        <end position="300"/>
    </location>
</feature>
<feature type="binding site" evidence="1">
    <location>
        <position position="347"/>
    </location>
    <ligand>
        <name>ATP</name>
        <dbReference type="ChEBI" id="CHEBI:30616"/>
    </ligand>
</feature>
<feature type="binding site" evidence="1">
    <location>
        <position position="349"/>
    </location>
    <ligand>
        <name>ATP</name>
        <dbReference type="ChEBI" id="CHEBI:30616"/>
    </ligand>
</feature>
<feature type="binding site" evidence="1">
    <location>
        <position position="350"/>
    </location>
    <ligand>
        <name>ATP</name>
        <dbReference type="ChEBI" id="CHEBI:30616"/>
    </ligand>
</feature>
<feature type="binding site" evidence="1">
    <location>
        <position position="351"/>
    </location>
    <ligand>
        <name>ATP</name>
        <dbReference type="ChEBI" id="CHEBI:30616"/>
    </ligand>
</feature>
<sequence length="643" mass="71318">MADVPADLAAVWPRVLEQLLGEGRGQGVEAKDEHWIRRCQPLALVADTALLAVPNEFAKGVLEGRLAPIVSETLSRECGRPIRIAITVDDSAGEPPPAAPPAQQTPKPRYEEPELPSGPYEGYGRHRGGADQLPGTEPRPEQLPSARPDQLPTVRPAYPSEYHRPEPGAWPRPAQDEYGWQQPRLGFPERDPYASPSSQDAYGSPSQDYRPQGMDRPPYEQQRGDYDTPRAEYEPARPDYDSARPDYESARPEYDQRDPVRRELPEPPAHRGGPGADMPSAGAPGPPAAQPAPASGPGEPTARLNPKYLFDTFVIGASNRFAHAAAVAVAEAPAKAYNPLFIYGESGLGKTHLLHAIGHYARSLYPGTRVRYVSSEEFTNEFINSIRDGKGDSFRKRYREMDILLVDDIQFLADKESTQEEFFHTFNTLHNANKQIVLSSDRPPKQLVTLEDRLRNRFEWGLITDVQPPELETRIAILRKKAVQEQLNAPPEVLEFIASRISRNIRELEGALIRVTAFASLNRQPVDLGLTEIVLKDLIPGGEDSTPEITATAIMAATADYFGLTVDDLCGSSRGRQLVTARQIAMYLCRELTDLSLPKIGAQFGGRDHTTVMHADRKIRALMAERRSIYNQVTELTNRIKNG</sequence>
<keyword id="KW-0067">ATP-binding</keyword>
<keyword id="KW-0963">Cytoplasm</keyword>
<keyword id="KW-0235">DNA replication</keyword>
<keyword id="KW-0238">DNA-binding</keyword>
<keyword id="KW-0446">Lipid-binding</keyword>
<keyword id="KW-0547">Nucleotide-binding</keyword>
<reference key="1">
    <citation type="journal article" date="1999" name="Eur. J. Biochem.">
        <title>Interactions of the Streptomyces lividans initiator protein DnaA with its target.</title>
        <authorList>
            <person name="Majka J."/>
            <person name="Jakimowicz D."/>
            <person name="Messer W."/>
            <person name="Schrempf H."/>
            <person name="Lisowski M."/>
            <person name="Zakrzewska-Czerwinska J."/>
        </authorList>
    </citation>
    <scope>NUCLEOTIDE SEQUENCE [GENOMIC DNA]</scope>
    <source>
        <strain>Tu45</strain>
    </source>
</reference>
<accession>Q9ZH76</accession>
<gene>
    <name evidence="1" type="primary">dnaA</name>
</gene>
<organism>
    <name type="scientific">Streptomyces reticuli</name>
    <dbReference type="NCBI Taxonomy" id="1926"/>
    <lineage>
        <taxon>Bacteria</taxon>
        <taxon>Bacillati</taxon>
        <taxon>Actinomycetota</taxon>
        <taxon>Actinomycetes</taxon>
        <taxon>Kitasatosporales</taxon>
        <taxon>Streptomycetaceae</taxon>
        <taxon>Streptomyces</taxon>
    </lineage>
</organism>
<proteinExistence type="inferred from homology"/>